<sequence length="226" mass="25027">MATPASITNVTVEFLQFPALVTPPGSTKSYFLGGAGVRGLNIQEEFVKFTGIGVYLEDKAVSSLAAKWKGKSAAELLDSLDFYRDIIKGPFEKLIRGSKLRTLDGREYVRKVSENCVAHMQSVGTYSDEEEKAIEEFRNAFKDQNFPPGSTVFYKQSPTGTLGLSFSKDETIPEHEHAVIDNKPLSEAVLETMIGEIPVSPALKESLATRFHQFFKELEANPNIEN</sequence>
<dbReference type="EC" id="5.5.1.6"/>
<dbReference type="EMBL" id="AY595414">
    <property type="protein sequence ID" value="AAT94359.1"/>
    <property type="molecule type" value="mRNA"/>
</dbReference>
<dbReference type="RefSeq" id="NP_001236755.1">
    <property type="nucleotide sequence ID" value="NM_001249826.3"/>
</dbReference>
<dbReference type="SMR" id="Q53B75"/>
<dbReference type="STRING" id="3847.Q53B75"/>
<dbReference type="PaxDb" id="3847-GLYMA20G38570.1"/>
<dbReference type="EnsemblPlants" id="KRG92977">
    <property type="protein sequence ID" value="KRG92977"/>
    <property type="gene ID" value="GLYMA_20G241600"/>
</dbReference>
<dbReference type="GeneID" id="732545"/>
<dbReference type="Gramene" id="KRG92977">
    <property type="protein sequence ID" value="KRG92977"/>
    <property type="gene ID" value="GLYMA_20G241600"/>
</dbReference>
<dbReference type="KEGG" id="gmx:732545"/>
<dbReference type="eggNOG" id="ENOG502QR5P">
    <property type="taxonomic scope" value="Eukaryota"/>
</dbReference>
<dbReference type="HOGENOM" id="CLU_074682_0_0_1"/>
<dbReference type="InParanoid" id="Q53B75"/>
<dbReference type="OMA" id="HEYVVIN"/>
<dbReference type="OrthoDB" id="1903537at2759"/>
<dbReference type="BRENDA" id="5.5.1.6">
    <property type="organism ID" value="2483"/>
</dbReference>
<dbReference type="UniPathway" id="UPA00154"/>
<dbReference type="Proteomes" id="UP000008827">
    <property type="component" value="Chromosome 20"/>
</dbReference>
<dbReference type="GO" id="GO:0045430">
    <property type="term" value="F:chalcone isomerase activity"/>
    <property type="evidence" value="ECO:0007669"/>
    <property type="project" value="UniProtKB-EC"/>
</dbReference>
<dbReference type="GO" id="GO:0009813">
    <property type="term" value="P:flavonoid biosynthetic process"/>
    <property type="evidence" value="ECO:0007669"/>
    <property type="project" value="UniProtKB-UniPathway"/>
</dbReference>
<dbReference type="Gene3D" id="1.10.890.20">
    <property type="match status" value="1"/>
</dbReference>
<dbReference type="Gene3D" id="3.50.70.10">
    <property type="match status" value="1"/>
</dbReference>
<dbReference type="InterPro" id="IPR044164">
    <property type="entry name" value="CFI"/>
</dbReference>
<dbReference type="InterPro" id="IPR016087">
    <property type="entry name" value="Chalcone_isomerase"/>
</dbReference>
<dbReference type="InterPro" id="IPR016088">
    <property type="entry name" value="Chalcone_isomerase_3-sand"/>
</dbReference>
<dbReference type="InterPro" id="IPR016089">
    <property type="entry name" value="Chalcone_isomerase_bundle_sf"/>
</dbReference>
<dbReference type="InterPro" id="IPR036298">
    <property type="entry name" value="Chalcone_isomerase_sf"/>
</dbReference>
<dbReference type="PANTHER" id="PTHR28039:SF9">
    <property type="entry name" value="CHALCONE--FLAVANONE ISOMERASE 1B-1"/>
    <property type="match status" value="1"/>
</dbReference>
<dbReference type="PANTHER" id="PTHR28039">
    <property type="entry name" value="CHALCONE--FLAVONONE ISOMERASE 1-RELATED"/>
    <property type="match status" value="1"/>
</dbReference>
<dbReference type="Pfam" id="PF02431">
    <property type="entry name" value="Chalcone"/>
    <property type="match status" value="1"/>
</dbReference>
<dbReference type="SUPFAM" id="SSF54626">
    <property type="entry name" value="Chalcone isomerase"/>
    <property type="match status" value="1"/>
</dbReference>
<organism>
    <name type="scientific">Glycine max</name>
    <name type="common">Soybean</name>
    <name type="synonym">Glycine hispida</name>
    <dbReference type="NCBI Taxonomy" id="3847"/>
    <lineage>
        <taxon>Eukaryota</taxon>
        <taxon>Viridiplantae</taxon>
        <taxon>Streptophyta</taxon>
        <taxon>Embryophyta</taxon>
        <taxon>Tracheophyta</taxon>
        <taxon>Spermatophyta</taxon>
        <taxon>Magnoliopsida</taxon>
        <taxon>eudicotyledons</taxon>
        <taxon>Gunneridae</taxon>
        <taxon>Pentapetalae</taxon>
        <taxon>rosids</taxon>
        <taxon>fabids</taxon>
        <taxon>Fabales</taxon>
        <taxon>Fabaceae</taxon>
        <taxon>Papilionoideae</taxon>
        <taxon>50 kb inversion clade</taxon>
        <taxon>NPAAA clade</taxon>
        <taxon>indigoferoid/millettioid clade</taxon>
        <taxon>Phaseoleae</taxon>
        <taxon>Glycine</taxon>
        <taxon>Glycine subgen. Soja</taxon>
    </lineage>
</organism>
<name>CF1B1_SOYBN</name>
<proteinExistence type="evidence at transcript level"/>
<feature type="chain" id="PRO_0000300851" description="Chalcone--flavanone isomerase 1B-1">
    <location>
        <begin position="1"/>
        <end position="226"/>
    </location>
</feature>
<feature type="binding site" evidence="1">
    <location>
        <position position="50"/>
    </location>
    <ligand>
        <name>substrate</name>
    </ligand>
</feature>
<feature type="binding site" evidence="1">
    <location>
        <position position="115"/>
    </location>
    <ligand>
        <name>substrate</name>
    </ligand>
</feature>
<feature type="binding site" evidence="1">
    <location>
        <position position="192"/>
    </location>
    <ligand>
        <name>substrate</name>
    </ligand>
</feature>
<feature type="site" description="Important for catalytic activity" evidence="1">
    <location>
        <position position="108"/>
    </location>
</feature>
<reference key="1">
    <citation type="journal article" date="2005" name="Plant Physiol.">
        <title>Partial reconstruction of flavonoid and isoflavonoid biosynthesis in yeast using soybean type I and type II chalcone isomerases.</title>
        <authorList>
            <person name="Ralston L."/>
            <person name="Subramanian S."/>
            <person name="Matsuno M."/>
            <person name="Yu O."/>
        </authorList>
    </citation>
    <scope>NUCLEOTIDE SEQUENCE [MRNA]</scope>
</reference>
<protein>
    <recommendedName>
        <fullName>Chalcone--flavanone isomerase 1B-1</fullName>
        <shortName>Chalcone isomerase 1B-1</shortName>
        <ecNumber>5.5.1.6</ecNumber>
    </recommendedName>
</protein>
<keyword id="KW-0284">Flavonoid biosynthesis</keyword>
<keyword id="KW-0413">Isomerase</keyword>
<keyword id="KW-1185">Reference proteome</keyword>
<gene>
    <name type="primary">CHI1B1</name>
</gene>
<accession>Q53B75</accession>
<evidence type="ECO:0000250" key="1"/>
<evidence type="ECO:0000305" key="2"/>
<comment type="function">
    <text evidence="1">Catalyzes the intramolecular cyclization of bicyclic chalcones into tricyclic (S)-flavanones. Responsible for the isomerization of 4,2',4',6'-tetrahydroxychalcone (also termed chalcone) into naringenin (By similarity).</text>
</comment>
<comment type="catalytic activity">
    <reaction>
        <text>a chalcone = a flavanone.</text>
        <dbReference type="EC" id="5.5.1.6"/>
    </reaction>
</comment>
<comment type="pathway">
    <text>Secondary metabolite biosynthesis; flavonoid biosynthesis.</text>
</comment>
<comment type="miscellaneous">
    <text>Part of the biosynthetic pathway for all classes of flavonoids, a large class of secondary plant metabolites, many of which are brightly colored.</text>
</comment>
<comment type="similarity">
    <text evidence="2">Belongs to the chalcone isomerase family.</text>
</comment>